<protein>
    <recommendedName>
        <fullName>Transcriptional regulator MraZ</fullName>
    </recommendedName>
</protein>
<evidence type="ECO:0000255" key="1">
    <source>
        <dbReference type="HAMAP-Rule" id="MF_01008"/>
    </source>
</evidence>
<evidence type="ECO:0000255" key="2">
    <source>
        <dbReference type="PROSITE-ProRule" id="PRU01076"/>
    </source>
</evidence>
<dbReference type="EMBL" id="CP000847">
    <property type="protein sequence ID" value="ABV75154.1"/>
    <property type="molecule type" value="Genomic_DNA"/>
</dbReference>
<dbReference type="RefSeq" id="WP_012149784.1">
    <property type="nucleotide sequence ID" value="NC_009881.1"/>
</dbReference>
<dbReference type="SMR" id="A8GP29"/>
<dbReference type="STRING" id="293614.A1C_04410"/>
<dbReference type="KEGG" id="rak:A1C_04410"/>
<dbReference type="eggNOG" id="COG2001">
    <property type="taxonomic scope" value="Bacteria"/>
</dbReference>
<dbReference type="HOGENOM" id="CLU_107907_1_0_5"/>
<dbReference type="Proteomes" id="UP000006830">
    <property type="component" value="Chromosome"/>
</dbReference>
<dbReference type="GO" id="GO:0005737">
    <property type="term" value="C:cytoplasm"/>
    <property type="evidence" value="ECO:0007669"/>
    <property type="project" value="UniProtKB-UniRule"/>
</dbReference>
<dbReference type="GO" id="GO:0009295">
    <property type="term" value="C:nucleoid"/>
    <property type="evidence" value="ECO:0007669"/>
    <property type="project" value="UniProtKB-SubCell"/>
</dbReference>
<dbReference type="GO" id="GO:0003700">
    <property type="term" value="F:DNA-binding transcription factor activity"/>
    <property type="evidence" value="ECO:0007669"/>
    <property type="project" value="UniProtKB-UniRule"/>
</dbReference>
<dbReference type="GO" id="GO:0000976">
    <property type="term" value="F:transcription cis-regulatory region binding"/>
    <property type="evidence" value="ECO:0007669"/>
    <property type="project" value="TreeGrafter"/>
</dbReference>
<dbReference type="GO" id="GO:2000143">
    <property type="term" value="P:negative regulation of DNA-templated transcription initiation"/>
    <property type="evidence" value="ECO:0007669"/>
    <property type="project" value="TreeGrafter"/>
</dbReference>
<dbReference type="CDD" id="cd16321">
    <property type="entry name" value="MraZ_C"/>
    <property type="match status" value="1"/>
</dbReference>
<dbReference type="CDD" id="cd16320">
    <property type="entry name" value="MraZ_N"/>
    <property type="match status" value="1"/>
</dbReference>
<dbReference type="Gene3D" id="3.40.1550.20">
    <property type="entry name" value="Transcriptional regulator MraZ domain"/>
    <property type="match status" value="1"/>
</dbReference>
<dbReference type="HAMAP" id="MF_01008">
    <property type="entry name" value="MraZ"/>
    <property type="match status" value="1"/>
</dbReference>
<dbReference type="InterPro" id="IPR003444">
    <property type="entry name" value="MraZ"/>
</dbReference>
<dbReference type="InterPro" id="IPR035644">
    <property type="entry name" value="MraZ_C"/>
</dbReference>
<dbReference type="InterPro" id="IPR020603">
    <property type="entry name" value="MraZ_dom"/>
</dbReference>
<dbReference type="InterPro" id="IPR035642">
    <property type="entry name" value="MraZ_N"/>
</dbReference>
<dbReference type="InterPro" id="IPR038619">
    <property type="entry name" value="MraZ_sf"/>
</dbReference>
<dbReference type="InterPro" id="IPR007159">
    <property type="entry name" value="SpoVT-AbrB_dom"/>
</dbReference>
<dbReference type="InterPro" id="IPR037914">
    <property type="entry name" value="SpoVT-AbrB_sf"/>
</dbReference>
<dbReference type="NCBIfam" id="NF001475">
    <property type="entry name" value="PRK00326.2-1"/>
    <property type="match status" value="1"/>
</dbReference>
<dbReference type="PANTHER" id="PTHR34701">
    <property type="entry name" value="TRANSCRIPTIONAL REGULATOR MRAZ"/>
    <property type="match status" value="1"/>
</dbReference>
<dbReference type="PANTHER" id="PTHR34701:SF1">
    <property type="entry name" value="TRANSCRIPTIONAL REGULATOR MRAZ"/>
    <property type="match status" value="1"/>
</dbReference>
<dbReference type="Pfam" id="PF02381">
    <property type="entry name" value="MraZ"/>
    <property type="match status" value="1"/>
</dbReference>
<dbReference type="SUPFAM" id="SSF89447">
    <property type="entry name" value="AbrB/MazE/MraZ-like"/>
    <property type="match status" value="1"/>
</dbReference>
<dbReference type="PROSITE" id="PS51740">
    <property type="entry name" value="SPOVT_ABRB"/>
    <property type="match status" value="2"/>
</dbReference>
<name>MRAZ_RICAH</name>
<proteinExistence type="inferred from homology"/>
<feature type="chain" id="PRO_1000062920" description="Transcriptional regulator MraZ">
    <location>
        <begin position="1"/>
        <end position="149"/>
    </location>
</feature>
<feature type="domain" description="SpoVT-AbrB 1" evidence="2">
    <location>
        <begin position="7"/>
        <end position="54"/>
    </location>
</feature>
<feature type="domain" description="SpoVT-AbrB 2" evidence="2">
    <location>
        <begin position="83"/>
        <end position="126"/>
    </location>
</feature>
<keyword id="KW-0963">Cytoplasm</keyword>
<keyword id="KW-0238">DNA-binding</keyword>
<keyword id="KW-0677">Repeat</keyword>
<keyword id="KW-0804">Transcription</keyword>
<keyword id="KW-0805">Transcription regulation</keyword>
<reference key="1">
    <citation type="submission" date="2007-09" db="EMBL/GenBank/DDBJ databases">
        <title>Complete genome sequence of Rickettsia akari.</title>
        <authorList>
            <person name="Madan A."/>
            <person name="Fahey J."/>
            <person name="Helton E."/>
            <person name="Ketteman M."/>
            <person name="Madan A."/>
            <person name="Rodrigues S."/>
            <person name="Sanchez A."/>
            <person name="Whiting M."/>
            <person name="Dasch G."/>
            <person name="Eremeeva M."/>
        </authorList>
    </citation>
    <scope>NUCLEOTIDE SEQUENCE [LARGE SCALE GENOMIC DNA]</scope>
    <source>
        <strain>Hartford</strain>
    </source>
</reference>
<comment type="subunit">
    <text evidence="1">Forms oligomers.</text>
</comment>
<comment type="subcellular location">
    <subcellularLocation>
        <location evidence="1">Cytoplasm</location>
        <location evidence="1">Nucleoid</location>
    </subcellularLocation>
</comment>
<comment type="similarity">
    <text evidence="1">Belongs to the MraZ family.</text>
</comment>
<organism>
    <name type="scientific">Rickettsia akari (strain Hartford)</name>
    <dbReference type="NCBI Taxonomy" id="293614"/>
    <lineage>
        <taxon>Bacteria</taxon>
        <taxon>Pseudomonadati</taxon>
        <taxon>Pseudomonadota</taxon>
        <taxon>Alphaproteobacteria</taxon>
        <taxon>Rickettsiales</taxon>
        <taxon>Rickettsiaceae</taxon>
        <taxon>Rickettsieae</taxon>
        <taxon>Rickettsia</taxon>
        <taxon>spotted fever group</taxon>
    </lineage>
</organism>
<gene>
    <name evidence="1" type="primary">mraZ</name>
    <name type="ordered locus">A1C_04410</name>
</gene>
<sequence>MNVFLSKYVNGVDKKSRVSVPANYRAVLGKELFNGVIAYPSIRNNCIEACGISHIEKLKQMIETLDPYSEERDAFETMIFGEAVQLSFDGDGRVILPQSLMKHAGIEEQACFVGKGVIFEIWQPQNFEKHLKSAQKIAHEQRFTLRNAN</sequence>
<accession>A8GP29</accession>